<protein>
    <recommendedName>
        <fullName>Innexin inx7</fullName>
        <shortName>Innexin-7</shortName>
    </recommendedName>
    <alternativeName>
        <fullName>Gap junction protein prp7</fullName>
    </alternativeName>
    <alternativeName>
        <fullName>Pas-related protein 7</fullName>
    </alternativeName>
</protein>
<reference key="1">
    <citation type="journal article" date="1999" name="Gene">
        <title>Drosophila has several genes for gap junction proteins.</title>
        <authorList>
            <person name="Curtin K.D."/>
            <person name="Zhang Z."/>
            <person name="Wyman R.J."/>
        </authorList>
    </citation>
    <scope>NUCLEOTIDE SEQUENCE [MRNA] (ISOFORM A)</scope>
    <scope>TISSUE SPECIFICITY</scope>
    <source>
        <tissue>Head</tissue>
    </source>
</reference>
<reference key="2">
    <citation type="journal article" date="2000" name="Science">
        <title>The genome sequence of Drosophila melanogaster.</title>
        <authorList>
            <person name="Adams M.D."/>
            <person name="Celniker S.E."/>
            <person name="Holt R.A."/>
            <person name="Evans C.A."/>
            <person name="Gocayne J.D."/>
            <person name="Amanatides P.G."/>
            <person name="Scherer S.E."/>
            <person name="Li P.W."/>
            <person name="Hoskins R.A."/>
            <person name="Galle R.F."/>
            <person name="George R.A."/>
            <person name="Lewis S.E."/>
            <person name="Richards S."/>
            <person name="Ashburner M."/>
            <person name="Henderson S.N."/>
            <person name="Sutton G.G."/>
            <person name="Wortman J.R."/>
            <person name="Yandell M.D."/>
            <person name="Zhang Q."/>
            <person name="Chen L.X."/>
            <person name="Brandon R.C."/>
            <person name="Rogers Y.-H.C."/>
            <person name="Blazej R.G."/>
            <person name="Champe M."/>
            <person name="Pfeiffer B.D."/>
            <person name="Wan K.H."/>
            <person name="Doyle C."/>
            <person name="Baxter E.G."/>
            <person name="Helt G."/>
            <person name="Nelson C.R."/>
            <person name="Miklos G.L.G."/>
            <person name="Abril J.F."/>
            <person name="Agbayani A."/>
            <person name="An H.-J."/>
            <person name="Andrews-Pfannkoch C."/>
            <person name="Baldwin D."/>
            <person name="Ballew R.M."/>
            <person name="Basu A."/>
            <person name="Baxendale J."/>
            <person name="Bayraktaroglu L."/>
            <person name="Beasley E.M."/>
            <person name="Beeson K.Y."/>
            <person name="Benos P.V."/>
            <person name="Berman B.P."/>
            <person name="Bhandari D."/>
            <person name="Bolshakov S."/>
            <person name="Borkova D."/>
            <person name="Botchan M.R."/>
            <person name="Bouck J."/>
            <person name="Brokstein P."/>
            <person name="Brottier P."/>
            <person name="Burtis K.C."/>
            <person name="Busam D.A."/>
            <person name="Butler H."/>
            <person name="Cadieu E."/>
            <person name="Center A."/>
            <person name="Chandra I."/>
            <person name="Cherry J.M."/>
            <person name="Cawley S."/>
            <person name="Dahlke C."/>
            <person name="Davenport L.B."/>
            <person name="Davies P."/>
            <person name="de Pablos B."/>
            <person name="Delcher A."/>
            <person name="Deng Z."/>
            <person name="Mays A.D."/>
            <person name="Dew I."/>
            <person name="Dietz S.M."/>
            <person name="Dodson K."/>
            <person name="Doup L.E."/>
            <person name="Downes M."/>
            <person name="Dugan-Rocha S."/>
            <person name="Dunkov B.C."/>
            <person name="Dunn P."/>
            <person name="Durbin K.J."/>
            <person name="Evangelista C.C."/>
            <person name="Ferraz C."/>
            <person name="Ferriera S."/>
            <person name="Fleischmann W."/>
            <person name="Fosler C."/>
            <person name="Gabrielian A.E."/>
            <person name="Garg N.S."/>
            <person name="Gelbart W.M."/>
            <person name="Glasser K."/>
            <person name="Glodek A."/>
            <person name="Gong F."/>
            <person name="Gorrell J.H."/>
            <person name="Gu Z."/>
            <person name="Guan P."/>
            <person name="Harris M."/>
            <person name="Harris N.L."/>
            <person name="Harvey D.A."/>
            <person name="Heiman T.J."/>
            <person name="Hernandez J.R."/>
            <person name="Houck J."/>
            <person name="Hostin D."/>
            <person name="Houston K.A."/>
            <person name="Howland T.J."/>
            <person name="Wei M.-H."/>
            <person name="Ibegwam C."/>
            <person name="Jalali M."/>
            <person name="Kalush F."/>
            <person name="Karpen G.H."/>
            <person name="Ke Z."/>
            <person name="Kennison J.A."/>
            <person name="Ketchum K.A."/>
            <person name="Kimmel B.E."/>
            <person name="Kodira C.D."/>
            <person name="Kraft C.L."/>
            <person name="Kravitz S."/>
            <person name="Kulp D."/>
            <person name="Lai Z."/>
            <person name="Lasko P."/>
            <person name="Lei Y."/>
            <person name="Levitsky A.A."/>
            <person name="Li J.H."/>
            <person name="Li Z."/>
            <person name="Liang Y."/>
            <person name="Lin X."/>
            <person name="Liu X."/>
            <person name="Mattei B."/>
            <person name="McIntosh T.C."/>
            <person name="McLeod M.P."/>
            <person name="McPherson D."/>
            <person name="Merkulov G."/>
            <person name="Milshina N.V."/>
            <person name="Mobarry C."/>
            <person name="Morris J."/>
            <person name="Moshrefi A."/>
            <person name="Mount S.M."/>
            <person name="Moy M."/>
            <person name="Murphy B."/>
            <person name="Murphy L."/>
            <person name="Muzny D.M."/>
            <person name="Nelson D.L."/>
            <person name="Nelson D.R."/>
            <person name="Nelson K.A."/>
            <person name="Nixon K."/>
            <person name="Nusskern D.R."/>
            <person name="Pacleb J.M."/>
            <person name="Palazzolo M."/>
            <person name="Pittman G.S."/>
            <person name="Pan S."/>
            <person name="Pollard J."/>
            <person name="Puri V."/>
            <person name="Reese M.G."/>
            <person name="Reinert K."/>
            <person name="Remington K."/>
            <person name="Saunders R.D.C."/>
            <person name="Scheeler F."/>
            <person name="Shen H."/>
            <person name="Shue B.C."/>
            <person name="Siden-Kiamos I."/>
            <person name="Simpson M."/>
            <person name="Skupski M.P."/>
            <person name="Smith T.J."/>
            <person name="Spier E."/>
            <person name="Spradling A.C."/>
            <person name="Stapleton M."/>
            <person name="Strong R."/>
            <person name="Sun E."/>
            <person name="Svirskas R."/>
            <person name="Tector C."/>
            <person name="Turner R."/>
            <person name="Venter E."/>
            <person name="Wang A.H."/>
            <person name="Wang X."/>
            <person name="Wang Z.-Y."/>
            <person name="Wassarman D.A."/>
            <person name="Weinstock G.M."/>
            <person name="Weissenbach J."/>
            <person name="Williams S.M."/>
            <person name="Woodage T."/>
            <person name="Worley K.C."/>
            <person name="Wu D."/>
            <person name="Yang S."/>
            <person name="Yao Q.A."/>
            <person name="Ye J."/>
            <person name="Yeh R.-F."/>
            <person name="Zaveri J.S."/>
            <person name="Zhan M."/>
            <person name="Zhang G."/>
            <person name="Zhao Q."/>
            <person name="Zheng L."/>
            <person name="Zheng X.H."/>
            <person name="Zhong F.N."/>
            <person name="Zhong W."/>
            <person name="Zhou X."/>
            <person name="Zhu S.C."/>
            <person name="Zhu X."/>
            <person name="Smith H.O."/>
            <person name="Gibbs R.A."/>
            <person name="Myers E.W."/>
            <person name="Rubin G.M."/>
            <person name="Venter J.C."/>
        </authorList>
    </citation>
    <scope>NUCLEOTIDE SEQUENCE [LARGE SCALE GENOMIC DNA]</scope>
    <source>
        <strain>Berkeley</strain>
    </source>
</reference>
<reference key="3">
    <citation type="journal article" date="2002" name="Genome Biol.">
        <title>Annotation of the Drosophila melanogaster euchromatic genome: a systematic review.</title>
        <authorList>
            <person name="Misra S."/>
            <person name="Crosby M.A."/>
            <person name="Mungall C.J."/>
            <person name="Matthews B.B."/>
            <person name="Campbell K.S."/>
            <person name="Hradecky P."/>
            <person name="Huang Y."/>
            <person name="Kaminker J.S."/>
            <person name="Millburn G.H."/>
            <person name="Prochnik S.E."/>
            <person name="Smith C.D."/>
            <person name="Tupy J.L."/>
            <person name="Whitfield E.J."/>
            <person name="Bayraktaroglu L."/>
            <person name="Berman B.P."/>
            <person name="Bettencourt B.R."/>
            <person name="Celniker S.E."/>
            <person name="de Grey A.D.N.J."/>
            <person name="Drysdale R.A."/>
            <person name="Harris N.L."/>
            <person name="Richter J."/>
            <person name="Russo S."/>
            <person name="Schroeder A.J."/>
            <person name="Shu S.Q."/>
            <person name="Stapleton M."/>
            <person name="Yamada C."/>
            <person name="Ashburner M."/>
            <person name="Gelbart W.M."/>
            <person name="Rubin G.M."/>
            <person name="Lewis S.E."/>
        </authorList>
    </citation>
    <scope>GENOME REANNOTATION</scope>
    <scope>ALTERNATIVE SPLICING</scope>
    <source>
        <strain>Berkeley</strain>
    </source>
</reference>
<reference key="4">
    <citation type="journal article" date="2002" name="Genome Biol.">
        <title>A Drosophila full-length cDNA resource.</title>
        <authorList>
            <person name="Stapleton M."/>
            <person name="Carlson J.W."/>
            <person name="Brokstein P."/>
            <person name="Yu C."/>
            <person name="Champe M."/>
            <person name="George R.A."/>
            <person name="Guarin H."/>
            <person name="Kronmiller B."/>
            <person name="Pacleb J.M."/>
            <person name="Park S."/>
            <person name="Wan K.H."/>
            <person name="Rubin G.M."/>
            <person name="Celniker S.E."/>
        </authorList>
    </citation>
    <scope>NUCLEOTIDE SEQUENCE [LARGE SCALE MRNA] (ISOFORM B)</scope>
    <source>
        <strain>Berkeley</strain>
        <tissue>Head</tissue>
    </source>
</reference>
<reference key="5">
    <citation type="submission" date="2009-08" db="EMBL/GenBank/DDBJ databases">
        <authorList>
            <person name="Carlson J."/>
            <person name="Booth B."/>
            <person name="Frise E."/>
            <person name="Park S."/>
            <person name="Wan K."/>
            <person name="Yu C."/>
            <person name="Celniker S."/>
        </authorList>
    </citation>
    <scope>NUCLEOTIDE SEQUENCE [LARGE SCALE MRNA] (ISOFORM A)</scope>
    <source>
        <strain>Berkeley</strain>
        <tissue>Embryo</tissue>
    </source>
</reference>
<accession>Q9V3W6</accession>
<accession>C6TP24</accession>
<accession>Q961J1</accession>
<dbReference type="EMBL" id="AF137270">
    <property type="protein sequence ID" value="AAD50379.1"/>
    <property type="molecule type" value="mRNA"/>
</dbReference>
<dbReference type="EMBL" id="AE014298">
    <property type="protein sequence ID" value="AAF46228.1"/>
    <property type="molecule type" value="Genomic_DNA"/>
</dbReference>
<dbReference type="EMBL" id="AE014298">
    <property type="protein sequence ID" value="AAN09192.1"/>
    <property type="molecule type" value="Genomic_DNA"/>
</dbReference>
<dbReference type="EMBL" id="AY051561">
    <property type="protein sequence ID" value="AAK92985.1"/>
    <property type="molecule type" value="mRNA"/>
</dbReference>
<dbReference type="EMBL" id="BT099510">
    <property type="protein sequence ID" value="ACU24750.1"/>
    <property type="molecule type" value="mRNA"/>
</dbReference>
<dbReference type="RefSeq" id="NP_788872.1">
    <molecule id="Q9V3W6-1"/>
    <property type="nucleotide sequence ID" value="NM_176699.3"/>
</dbReference>
<dbReference type="BioGRID" id="59318">
    <property type="interactions" value="14"/>
</dbReference>
<dbReference type="DIP" id="DIP-23156N"/>
<dbReference type="FunCoup" id="Q9V3W6">
    <property type="interactions" value="13"/>
</dbReference>
<dbReference type="IntAct" id="Q9V3W6">
    <property type="interactions" value="9"/>
</dbReference>
<dbReference type="STRING" id="7227.FBpp0070994"/>
<dbReference type="GlyGen" id="Q9V3W6">
    <property type="glycosylation" value="1 site"/>
</dbReference>
<dbReference type="PaxDb" id="7227-FBpp0070994"/>
<dbReference type="DNASU" id="33027"/>
<dbReference type="EnsemblMetazoa" id="FBtr0071035">
    <molecule id="Q9V3W6-1"/>
    <property type="protein sequence ID" value="FBpp0070994"/>
    <property type="gene ID" value="FBgn0027106"/>
</dbReference>
<dbReference type="GeneID" id="33027"/>
<dbReference type="KEGG" id="dme:Dmel_CG2977"/>
<dbReference type="AGR" id="FB:FBgn0027106"/>
<dbReference type="CTD" id="33027"/>
<dbReference type="FlyBase" id="FBgn0027106">
    <property type="gene designation" value="Inx7"/>
</dbReference>
<dbReference type="VEuPathDB" id="VectorBase:FBgn0027106"/>
<dbReference type="eggNOG" id="ENOG502QS4R">
    <property type="taxonomic scope" value="Eukaryota"/>
</dbReference>
<dbReference type="HOGENOM" id="CLU_035763_1_0_1"/>
<dbReference type="InParanoid" id="Q9V3W6"/>
<dbReference type="OMA" id="QITWTNR"/>
<dbReference type="OrthoDB" id="5867527at2759"/>
<dbReference type="PhylomeDB" id="Q9V3W6"/>
<dbReference type="BioGRID-ORCS" id="33027">
    <property type="hits" value="0 hits in 1 CRISPR screen"/>
</dbReference>
<dbReference type="GenomeRNAi" id="33027"/>
<dbReference type="PRO" id="PR:Q9V3W6"/>
<dbReference type="Proteomes" id="UP000000803">
    <property type="component" value="Chromosome X"/>
</dbReference>
<dbReference type="Bgee" id="FBgn0027106">
    <property type="expression patterns" value="Expressed in nurse follicle cell (Drosophila) in ovary and 30 other cell types or tissues"/>
</dbReference>
<dbReference type="GO" id="GO:0005737">
    <property type="term" value="C:cytoplasm"/>
    <property type="evidence" value="ECO:0000314"/>
    <property type="project" value="FlyBase"/>
</dbReference>
<dbReference type="GO" id="GO:0005921">
    <property type="term" value="C:gap junction"/>
    <property type="evidence" value="ECO:0000314"/>
    <property type="project" value="UniProtKB"/>
</dbReference>
<dbReference type="GO" id="GO:0016020">
    <property type="term" value="C:membrane"/>
    <property type="evidence" value="ECO:0000303"/>
    <property type="project" value="UniProtKB"/>
</dbReference>
<dbReference type="GO" id="GO:0005634">
    <property type="term" value="C:nucleus"/>
    <property type="evidence" value="ECO:0000314"/>
    <property type="project" value="FlyBase"/>
</dbReference>
<dbReference type="GO" id="GO:0005886">
    <property type="term" value="C:plasma membrane"/>
    <property type="evidence" value="ECO:0000318"/>
    <property type="project" value="GO_Central"/>
</dbReference>
<dbReference type="GO" id="GO:0005243">
    <property type="term" value="F:gap junction channel activity"/>
    <property type="evidence" value="ECO:0000318"/>
    <property type="project" value="GO_Central"/>
</dbReference>
<dbReference type="GO" id="GO:0010496">
    <property type="term" value="P:intercellular transport"/>
    <property type="evidence" value="ECO:0000250"/>
    <property type="project" value="FlyBase"/>
</dbReference>
<dbReference type="GO" id="GO:0072375">
    <property type="term" value="P:medium-term memory"/>
    <property type="evidence" value="ECO:0000315"/>
    <property type="project" value="FlyBase"/>
</dbReference>
<dbReference type="GO" id="GO:0034220">
    <property type="term" value="P:monoatomic ion transmembrane transport"/>
    <property type="evidence" value="ECO:0007669"/>
    <property type="project" value="UniProtKB-KW"/>
</dbReference>
<dbReference type="GO" id="GO:0007602">
    <property type="term" value="P:phototransduction"/>
    <property type="evidence" value="ECO:0000318"/>
    <property type="project" value="GO_Central"/>
</dbReference>
<dbReference type="InterPro" id="IPR000990">
    <property type="entry name" value="Innexin"/>
</dbReference>
<dbReference type="PANTHER" id="PTHR11893">
    <property type="entry name" value="INNEXIN"/>
    <property type="match status" value="1"/>
</dbReference>
<dbReference type="PANTHER" id="PTHR11893:SF38">
    <property type="entry name" value="INNEXIN INX7"/>
    <property type="match status" value="1"/>
</dbReference>
<dbReference type="Pfam" id="PF00876">
    <property type="entry name" value="Innexin"/>
    <property type="match status" value="1"/>
</dbReference>
<dbReference type="PRINTS" id="PR01262">
    <property type="entry name" value="INNEXIN"/>
</dbReference>
<dbReference type="PROSITE" id="PS51013">
    <property type="entry name" value="PANNEXIN"/>
    <property type="match status" value="1"/>
</dbReference>
<feature type="chain" id="PRO_0000208503" description="Innexin inx7">
    <location>
        <begin position="1"/>
        <end position="438"/>
    </location>
</feature>
<feature type="topological domain" description="Cytoplasmic" evidence="2">
    <location>
        <begin position="1"/>
        <end position="23"/>
    </location>
</feature>
<feature type="transmembrane region" description="Helical" evidence="3">
    <location>
        <begin position="24"/>
        <end position="44"/>
    </location>
</feature>
<feature type="topological domain" description="Extracellular" evidence="2">
    <location>
        <begin position="45"/>
        <end position="58"/>
    </location>
</feature>
<feature type="transmembrane region" description="Helical" evidence="3">
    <location>
        <begin position="59"/>
        <end position="79"/>
    </location>
</feature>
<feature type="topological domain" description="Cytoplasmic" evidence="2">
    <location>
        <begin position="80"/>
        <end position="112"/>
    </location>
</feature>
<feature type="transmembrane region" description="Helical" evidence="3">
    <location>
        <begin position="113"/>
        <end position="133"/>
    </location>
</feature>
<feature type="topological domain" description="Extracellular" evidence="2">
    <location>
        <begin position="134"/>
        <end position="283"/>
    </location>
</feature>
<feature type="transmembrane region" description="Helical" evidence="3">
    <location>
        <begin position="284"/>
        <end position="304"/>
    </location>
</feature>
<feature type="topological domain" description="Cytoplasmic" evidence="2">
    <location>
        <begin position="305"/>
        <end position="438"/>
    </location>
</feature>
<feature type="region of interest" description="Disordered" evidence="4">
    <location>
        <begin position="381"/>
        <end position="402"/>
    </location>
</feature>
<feature type="region of interest" description="Disordered" evidence="4">
    <location>
        <begin position="415"/>
        <end position="438"/>
    </location>
</feature>
<feature type="compositionally biased region" description="Low complexity" evidence="4">
    <location>
        <begin position="418"/>
        <end position="431"/>
    </location>
</feature>
<feature type="splice variant" id="VSP_028731" description="In isoform B." evidence="6">
    <location>
        <begin position="2"/>
        <end position="78"/>
    </location>
</feature>
<comment type="function">
    <text evidence="1">Structural components of the gap junctions.</text>
</comment>
<comment type="subcellular location">
    <subcellularLocation>
        <location evidence="7">Cell membrane</location>
        <topology evidence="3">Multi-pass membrane protein</topology>
    </subcellularLocation>
    <subcellularLocation>
        <location evidence="1">Cell junction</location>
        <location evidence="1">Gap junction</location>
    </subcellularLocation>
</comment>
<comment type="alternative products">
    <event type="alternative splicing"/>
    <isoform>
        <id>Q9V3W6-1</id>
        <name>A</name>
        <sequence type="displayed"/>
    </isoform>
    <isoform>
        <id>Q9V3W6-2</id>
        <name>B</name>
        <sequence type="described" ref="VSP_028731"/>
    </isoform>
</comment>
<comment type="tissue specificity">
    <text evidence="5">Expressed around gut lobes in embryonic stages 15-17.</text>
</comment>
<comment type="similarity">
    <text evidence="3">Belongs to the pannexin family.</text>
</comment>
<sequence>MLNTFSSVRQYLKFDLTRVVIDNIVFKLHYRWTFVILLVATLLITSRQYIGEHIQCLSDGVVSPVINTFCFFTPTFTVVRDQNQTAYRPGSEPPGIGAFDPEKDTIKRHAYYQWVPFVLFFQALCFYIPHALWKSWEGGRIKALVFGLRMVGLTRYLKNDSLRIGKLNIPSMAEAEERVKDIRRTMIDRMRLNQSWGAHLVFAEVLNLINLLLQITWTNRFLGGQFLTLGPHALKNRWSDELSVLDLVFPKITKCKFHKFGDSGSIQMHDALCVMALNIMNEKIYIILWFWYAFLLIVTVLGLLWRILTLCFYRNVTFTRWSLYWAKPGQLDENELLAVIDKCNFSNWMFLFFLRSNLSEFLFKKVIYHLASEFPNPDHDNDVNAYREAPPTPAKNRYPELSGLDTIDSPLLHLRRNGSPSAGGAQGPSTSDMAKLPV</sequence>
<gene>
    <name type="primary">Inx7</name>
    <name type="synonym">prp7</name>
    <name type="ORF">CG2977</name>
</gene>
<proteinExistence type="evidence at transcript level"/>
<evidence type="ECO:0000250" key="1"/>
<evidence type="ECO:0000255" key="2"/>
<evidence type="ECO:0000255" key="3">
    <source>
        <dbReference type="PROSITE-ProRule" id="PRU00351"/>
    </source>
</evidence>
<evidence type="ECO:0000256" key="4">
    <source>
        <dbReference type="SAM" id="MobiDB-lite"/>
    </source>
</evidence>
<evidence type="ECO:0000269" key="5">
    <source>
    </source>
</evidence>
<evidence type="ECO:0000303" key="6">
    <source>
    </source>
</evidence>
<evidence type="ECO:0000305" key="7"/>
<keyword id="KW-0025">Alternative splicing</keyword>
<keyword id="KW-0965">Cell junction</keyword>
<keyword id="KW-1003">Cell membrane</keyword>
<keyword id="KW-0303">Gap junction</keyword>
<keyword id="KW-0407">Ion channel</keyword>
<keyword id="KW-0406">Ion transport</keyword>
<keyword id="KW-0472">Membrane</keyword>
<keyword id="KW-1185">Reference proteome</keyword>
<keyword id="KW-0812">Transmembrane</keyword>
<keyword id="KW-1133">Transmembrane helix</keyword>
<keyword id="KW-0813">Transport</keyword>
<name>INX7_DROME</name>
<organism>
    <name type="scientific">Drosophila melanogaster</name>
    <name type="common">Fruit fly</name>
    <dbReference type="NCBI Taxonomy" id="7227"/>
    <lineage>
        <taxon>Eukaryota</taxon>
        <taxon>Metazoa</taxon>
        <taxon>Ecdysozoa</taxon>
        <taxon>Arthropoda</taxon>
        <taxon>Hexapoda</taxon>
        <taxon>Insecta</taxon>
        <taxon>Pterygota</taxon>
        <taxon>Neoptera</taxon>
        <taxon>Endopterygota</taxon>
        <taxon>Diptera</taxon>
        <taxon>Brachycera</taxon>
        <taxon>Muscomorpha</taxon>
        <taxon>Ephydroidea</taxon>
        <taxon>Drosophilidae</taxon>
        <taxon>Drosophila</taxon>
        <taxon>Sophophora</taxon>
    </lineage>
</organism>